<evidence type="ECO:0000255" key="1">
    <source>
        <dbReference type="HAMAP-Rule" id="MF_00294"/>
    </source>
</evidence>
<evidence type="ECO:0000305" key="2"/>
<accession>A7HWZ1</accession>
<organism>
    <name type="scientific">Parvibaculum lavamentivorans (strain DS-1 / DSM 13023 / NCIMB 13966)</name>
    <dbReference type="NCBI Taxonomy" id="402881"/>
    <lineage>
        <taxon>Bacteria</taxon>
        <taxon>Pseudomonadati</taxon>
        <taxon>Pseudomonadota</taxon>
        <taxon>Alphaproteobacteria</taxon>
        <taxon>Hyphomicrobiales</taxon>
        <taxon>Parvibaculaceae</taxon>
        <taxon>Parvibaculum</taxon>
    </lineage>
</organism>
<keyword id="KW-1185">Reference proteome</keyword>
<keyword id="KW-0687">Ribonucleoprotein</keyword>
<keyword id="KW-0689">Ribosomal protein</keyword>
<comment type="similarity">
    <text evidence="1">Belongs to the bacterial ribosomal protein bL33 family.</text>
</comment>
<feature type="chain" id="PRO_0000356602" description="Large ribosomal subunit protein bL33">
    <location>
        <begin position="1"/>
        <end position="55"/>
    </location>
</feature>
<reference key="1">
    <citation type="journal article" date="2011" name="Stand. Genomic Sci.">
        <title>Complete genome sequence of Parvibaculum lavamentivorans type strain (DS-1(T)).</title>
        <authorList>
            <person name="Schleheck D."/>
            <person name="Weiss M."/>
            <person name="Pitluck S."/>
            <person name="Bruce D."/>
            <person name="Land M.L."/>
            <person name="Han S."/>
            <person name="Saunders E."/>
            <person name="Tapia R."/>
            <person name="Detter C."/>
            <person name="Brettin T."/>
            <person name="Han J."/>
            <person name="Woyke T."/>
            <person name="Goodwin L."/>
            <person name="Pennacchio L."/>
            <person name="Nolan M."/>
            <person name="Cook A.M."/>
            <person name="Kjelleberg S."/>
            <person name="Thomas T."/>
        </authorList>
    </citation>
    <scope>NUCLEOTIDE SEQUENCE [LARGE SCALE GENOMIC DNA]</scope>
    <source>
        <strain>DS-1 / DSM 13023 / NCIMB 13966</strain>
    </source>
</reference>
<name>RL33_PARL1</name>
<sequence>MAKPASIKIKLESTADTGYFYVTKKNSRTMTEKMVIKKYDPIARKHVEFKETKIK</sequence>
<protein>
    <recommendedName>
        <fullName evidence="1">Large ribosomal subunit protein bL33</fullName>
    </recommendedName>
    <alternativeName>
        <fullName evidence="2">50S ribosomal protein L33</fullName>
    </alternativeName>
</protein>
<proteinExistence type="inferred from homology"/>
<gene>
    <name evidence="1" type="primary">rpmG</name>
    <name type="ordered locus">Plav_2816</name>
</gene>
<dbReference type="EMBL" id="CP000774">
    <property type="protein sequence ID" value="ABS64424.1"/>
    <property type="molecule type" value="Genomic_DNA"/>
</dbReference>
<dbReference type="RefSeq" id="WP_012111739.1">
    <property type="nucleotide sequence ID" value="NC_009719.1"/>
</dbReference>
<dbReference type="SMR" id="A7HWZ1"/>
<dbReference type="STRING" id="402881.Plav_2816"/>
<dbReference type="KEGG" id="pla:Plav_2816"/>
<dbReference type="eggNOG" id="COG0267">
    <property type="taxonomic scope" value="Bacteria"/>
</dbReference>
<dbReference type="HOGENOM" id="CLU_190949_1_1_5"/>
<dbReference type="OrthoDB" id="21586at2"/>
<dbReference type="Proteomes" id="UP000006377">
    <property type="component" value="Chromosome"/>
</dbReference>
<dbReference type="GO" id="GO:0022625">
    <property type="term" value="C:cytosolic large ribosomal subunit"/>
    <property type="evidence" value="ECO:0007669"/>
    <property type="project" value="TreeGrafter"/>
</dbReference>
<dbReference type="GO" id="GO:0003735">
    <property type="term" value="F:structural constituent of ribosome"/>
    <property type="evidence" value="ECO:0007669"/>
    <property type="project" value="InterPro"/>
</dbReference>
<dbReference type="GO" id="GO:0006412">
    <property type="term" value="P:translation"/>
    <property type="evidence" value="ECO:0007669"/>
    <property type="project" value="UniProtKB-UniRule"/>
</dbReference>
<dbReference type="Gene3D" id="2.20.28.120">
    <property type="entry name" value="Ribosomal protein L33"/>
    <property type="match status" value="1"/>
</dbReference>
<dbReference type="HAMAP" id="MF_00294">
    <property type="entry name" value="Ribosomal_bL33"/>
    <property type="match status" value="1"/>
</dbReference>
<dbReference type="InterPro" id="IPR001705">
    <property type="entry name" value="Ribosomal_bL33"/>
</dbReference>
<dbReference type="InterPro" id="IPR018264">
    <property type="entry name" value="Ribosomal_bL33_CS"/>
</dbReference>
<dbReference type="InterPro" id="IPR038584">
    <property type="entry name" value="Ribosomal_bL33_sf"/>
</dbReference>
<dbReference type="InterPro" id="IPR011332">
    <property type="entry name" value="Ribosomal_zn-bd"/>
</dbReference>
<dbReference type="NCBIfam" id="NF001860">
    <property type="entry name" value="PRK00595.1"/>
    <property type="match status" value="1"/>
</dbReference>
<dbReference type="NCBIfam" id="TIGR01023">
    <property type="entry name" value="rpmG_bact"/>
    <property type="match status" value="1"/>
</dbReference>
<dbReference type="PANTHER" id="PTHR15238">
    <property type="entry name" value="54S RIBOSOMAL PROTEIN L39, MITOCHONDRIAL"/>
    <property type="match status" value="1"/>
</dbReference>
<dbReference type="PANTHER" id="PTHR15238:SF1">
    <property type="entry name" value="LARGE RIBOSOMAL SUBUNIT PROTEIN BL33M"/>
    <property type="match status" value="1"/>
</dbReference>
<dbReference type="Pfam" id="PF00471">
    <property type="entry name" value="Ribosomal_L33"/>
    <property type="match status" value="1"/>
</dbReference>
<dbReference type="SUPFAM" id="SSF57829">
    <property type="entry name" value="Zn-binding ribosomal proteins"/>
    <property type="match status" value="1"/>
</dbReference>
<dbReference type="PROSITE" id="PS00582">
    <property type="entry name" value="RIBOSOMAL_L33"/>
    <property type="match status" value="1"/>
</dbReference>